<gene>
    <name evidence="1" type="primary">dapD</name>
    <name type="ordered locus">bbp_211</name>
</gene>
<accession>Q89AP4</accession>
<evidence type="ECO:0000255" key="1">
    <source>
        <dbReference type="HAMAP-Rule" id="MF_00811"/>
    </source>
</evidence>
<comment type="catalytic activity">
    <reaction evidence="1">
        <text>(S)-2,3,4,5-tetrahydrodipicolinate + succinyl-CoA + H2O = (S)-2-succinylamino-6-oxoheptanedioate + CoA</text>
        <dbReference type="Rhea" id="RHEA:17325"/>
        <dbReference type="ChEBI" id="CHEBI:15377"/>
        <dbReference type="ChEBI" id="CHEBI:15685"/>
        <dbReference type="ChEBI" id="CHEBI:16845"/>
        <dbReference type="ChEBI" id="CHEBI:57287"/>
        <dbReference type="ChEBI" id="CHEBI:57292"/>
        <dbReference type="EC" id="2.3.1.117"/>
    </reaction>
</comment>
<comment type="pathway">
    <text evidence="1">Amino-acid biosynthesis; L-lysine biosynthesis via DAP pathway; LL-2,6-diaminopimelate from (S)-tetrahydrodipicolinate (succinylase route): step 1/3.</text>
</comment>
<comment type="subunit">
    <text evidence="1">Homotrimer.</text>
</comment>
<comment type="subcellular location">
    <subcellularLocation>
        <location evidence="1">Cytoplasm</location>
    </subcellularLocation>
</comment>
<comment type="similarity">
    <text evidence="1">Belongs to the transferase hexapeptide repeat family.</text>
</comment>
<organism>
    <name type="scientific">Buchnera aphidicola subsp. Baizongia pistaciae (strain Bp)</name>
    <dbReference type="NCBI Taxonomy" id="224915"/>
    <lineage>
        <taxon>Bacteria</taxon>
        <taxon>Pseudomonadati</taxon>
        <taxon>Pseudomonadota</taxon>
        <taxon>Gammaproteobacteria</taxon>
        <taxon>Enterobacterales</taxon>
        <taxon>Erwiniaceae</taxon>
        <taxon>Buchnera</taxon>
    </lineage>
</organism>
<name>DAPD_BUCBP</name>
<reference key="1">
    <citation type="journal article" date="2003" name="Proc. Natl. Acad. Sci. U.S.A.">
        <title>Reductive genome evolution in Buchnera aphidicola.</title>
        <authorList>
            <person name="van Ham R.C.H.J."/>
            <person name="Kamerbeek J."/>
            <person name="Palacios C."/>
            <person name="Rausell C."/>
            <person name="Abascal F."/>
            <person name="Bastolla U."/>
            <person name="Fernandez J.M."/>
            <person name="Jimenez L."/>
            <person name="Postigo M."/>
            <person name="Silva F.J."/>
            <person name="Tamames J."/>
            <person name="Viguera E."/>
            <person name="Latorre A."/>
            <person name="Valencia A."/>
            <person name="Moran F."/>
            <person name="Moya A."/>
        </authorList>
    </citation>
    <scope>NUCLEOTIDE SEQUENCE [LARGE SCALE GENOMIC DNA]</scope>
    <source>
        <strain>Bp</strain>
    </source>
</reference>
<sequence length="274" mass="30538">MHTLKNIINKTFDNKLNIHQHNVDQKTTDAINQVLHMLNIGKLRVSEKINGFWITHQWLKKAILLSFLVNKNVLFSNKQTCFYDKIKLKYCNYTEEKFKNEKIRIVPPATVRHGAFIGKNTILMPCYVNTGAYIDEGTMIDTWATVGSCAQIGKNVHLSGGVGIGGVLEPLQNNPTIIEDNCFIGARSEIVEGVIIESNSVISMGVFIGQSTKIYDRNNKKILYGKVPSGSVVVPGSLPSKNNCNLYCVVIVKQVNAQTLSKTGINKLLREITE</sequence>
<feature type="chain" id="PRO_0000196925" description="2,3,4,5-tetrahydropyridine-2,6-dicarboxylate N-succinyltransferase">
    <location>
        <begin position="1"/>
        <end position="274"/>
    </location>
</feature>
<feature type="binding site" evidence="1">
    <location>
        <position position="104"/>
    </location>
    <ligand>
        <name>substrate</name>
    </ligand>
</feature>
<feature type="binding site" evidence="1">
    <location>
        <position position="141"/>
    </location>
    <ligand>
        <name>substrate</name>
    </ligand>
</feature>
<keyword id="KW-0012">Acyltransferase</keyword>
<keyword id="KW-0028">Amino-acid biosynthesis</keyword>
<keyword id="KW-0963">Cytoplasm</keyword>
<keyword id="KW-0220">Diaminopimelate biosynthesis</keyword>
<keyword id="KW-0457">Lysine biosynthesis</keyword>
<keyword id="KW-1185">Reference proteome</keyword>
<keyword id="KW-0677">Repeat</keyword>
<keyword id="KW-0808">Transferase</keyword>
<dbReference type="EC" id="2.3.1.117" evidence="1"/>
<dbReference type="EMBL" id="AE016826">
    <property type="protein sequence ID" value="AAO26943.1"/>
    <property type="molecule type" value="Genomic_DNA"/>
</dbReference>
<dbReference type="RefSeq" id="WP_011091344.1">
    <property type="nucleotide sequence ID" value="NC_004545.1"/>
</dbReference>
<dbReference type="SMR" id="Q89AP4"/>
<dbReference type="STRING" id="224915.bbp_211"/>
<dbReference type="KEGG" id="bab:bbp_211"/>
<dbReference type="eggNOG" id="COG2171">
    <property type="taxonomic scope" value="Bacteria"/>
</dbReference>
<dbReference type="HOGENOM" id="CLU_050859_0_1_6"/>
<dbReference type="OrthoDB" id="9775362at2"/>
<dbReference type="UniPathway" id="UPA00034">
    <property type="reaction ID" value="UER00019"/>
</dbReference>
<dbReference type="Proteomes" id="UP000000601">
    <property type="component" value="Chromosome"/>
</dbReference>
<dbReference type="GO" id="GO:0005737">
    <property type="term" value="C:cytoplasm"/>
    <property type="evidence" value="ECO:0007669"/>
    <property type="project" value="UniProtKB-SubCell"/>
</dbReference>
<dbReference type="GO" id="GO:0008666">
    <property type="term" value="F:2,3,4,5-tetrahydropyridine-2,6-dicarboxylate N-succinyltransferase activity"/>
    <property type="evidence" value="ECO:0007669"/>
    <property type="project" value="UniProtKB-UniRule"/>
</dbReference>
<dbReference type="GO" id="GO:0019877">
    <property type="term" value="P:diaminopimelate biosynthetic process"/>
    <property type="evidence" value="ECO:0007669"/>
    <property type="project" value="UniProtKB-UniRule"/>
</dbReference>
<dbReference type="GO" id="GO:0009089">
    <property type="term" value="P:lysine biosynthetic process via diaminopimelate"/>
    <property type="evidence" value="ECO:0007669"/>
    <property type="project" value="UniProtKB-UniRule"/>
</dbReference>
<dbReference type="CDD" id="cd03350">
    <property type="entry name" value="LbH_THP_succinylT"/>
    <property type="match status" value="1"/>
</dbReference>
<dbReference type="Gene3D" id="2.160.10.10">
    <property type="entry name" value="Hexapeptide repeat proteins"/>
    <property type="match status" value="1"/>
</dbReference>
<dbReference type="Gene3D" id="1.10.166.10">
    <property type="entry name" value="Tetrahydrodipicolinate-N-succinyltransferase, N-terminal domain"/>
    <property type="match status" value="1"/>
</dbReference>
<dbReference type="HAMAP" id="MF_00811">
    <property type="entry name" value="DapD"/>
    <property type="match status" value="1"/>
</dbReference>
<dbReference type="InterPro" id="IPR005664">
    <property type="entry name" value="DapD_Trfase_Hexpep_rpt_fam"/>
</dbReference>
<dbReference type="InterPro" id="IPR001451">
    <property type="entry name" value="Hexapep"/>
</dbReference>
<dbReference type="InterPro" id="IPR018357">
    <property type="entry name" value="Hexapep_transf_CS"/>
</dbReference>
<dbReference type="InterPro" id="IPR023180">
    <property type="entry name" value="THP_succinylTrfase_dom1"/>
</dbReference>
<dbReference type="InterPro" id="IPR037133">
    <property type="entry name" value="THP_succinylTrfase_N_sf"/>
</dbReference>
<dbReference type="InterPro" id="IPR050179">
    <property type="entry name" value="Trans_hexapeptide_repeat"/>
</dbReference>
<dbReference type="InterPro" id="IPR011004">
    <property type="entry name" value="Trimer_LpxA-like_sf"/>
</dbReference>
<dbReference type="NCBIfam" id="TIGR00965">
    <property type="entry name" value="dapD"/>
    <property type="match status" value="1"/>
</dbReference>
<dbReference type="NCBIfam" id="NF008808">
    <property type="entry name" value="PRK11830.1"/>
    <property type="match status" value="1"/>
</dbReference>
<dbReference type="PANTHER" id="PTHR43300:SF10">
    <property type="entry name" value="2,3,4,5-TETRAHYDROPYRIDINE-2,6-DICARBOXYLATE N-ACETYLTRANSFERASE"/>
    <property type="match status" value="1"/>
</dbReference>
<dbReference type="PANTHER" id="PTHR43300">
    <property type="entry name" value="ACETYLTRANSFERASE"/>
    <property type="match status" value="1"/>
</dbReference>
<dbReference type="Pfam" id="PF14602">
    <property type="entry name" value="Hexapep_2"/>
    <property type="match status" value="1"/>
</dbReference>
<dbReference type="Pfam" id="PF14805">
    <property type="entry name" value="THDPS_N_2"/>
    <property type="match status" value="1"/>
</dbReference>
<dbReference type="SUPFAM" id="SSF51161">
    <property type="entry name" value="Trimeric LpxA-like enzymes"/>
    <property type="match status" value="1"/>
</dbReference>
<dbReference type="PROSITE" id="PS00101">
    <property type="entry name" value="HEXAPEP_TRANSFERASES"/>
    <property type="match status" value="1"/>
</dbReference>
<proteinExistence type="inferred from homology"/>
<protein>
    <recommendedName>
        <fullName evidence="1">2,3,4,5-tetrahydropyridine-2,6-dicarboxylate N-succinyltransferase</fullName>
        <ecNumber evidence="1">2.3.1.117</ecNumber>
    </recommendedName>
    <alternativeName>
        <fullName evidence="1">Tetrahydrodipicolinate N-succinyltransferase</fullName>
        <shortName evidence="1">THDP succinyltransferase</shortName>
        <shortName evidence="1">THP succinyltransferase</shortName>
        <shortName evidence="1">Tetrahydropicolinate succinylase</shortName>
    </alternativeName>
</protein>